<feature type="chain" id="PRO_0000358551" description="NAD(P)H-quinone oxidoreductase subunit K, chloroplastic">
    <location>
        <begin position="1"/>
        <end position="235"/>
    </location>
</feature>
<feature type="binding site" evidence="1">
    <location>
        <position position="43"/>
    </location>
    <ligand>
        <name>[4Fe-4S] cluster</name>
        <dbReference type="ChEBI" id="CHEBI:49883"/>
    </ligand>
</feature>
<feature type="binding site" evidence="1">
    <location>
        <position position="44"/>
    </location>
    <ligand>
        <name>[4Fe-4S] cluster</name>
        <dbReference type="ChEBI" id="CHEBI:49883"/>
    </ligand>
</feature>
<feature type="binding site" evidence="1">
    <location>
        <position position="108"/>
    </location>
    <ligand>
        <name>[4Fe-4S] cluster</name>
        <dbReference type="ChEBI" id="CHEBI:49883"/>
    </ligand>
</feature>
<feature type="binding site" evidence="1">
    <location>
        <position position="139"/>
    </location>
    <ligand>
        <name>[4Fe-4S] cluster</name>
        <dbReference type="ChEBI" id="CHEBI:49883"/>
    </ligand>
</feature>
<organism>
    <name type="scientific">Ipomoea purpurea</name>
    <name type="common">Common morning glory</name>
    <name type="synonym">Pharbitis purpurea</name>
    <dbReference type="NCBI Taxonomy" id="4121"/>
    <lineage>
        <taxon>Eukaryota</taxon>
        <taxon>Viridiplantae</taxon>
        <taxon>Streptophyta</taxon>
        <taxon>Embryophyta</taxon>
        <taxon>Tracheophyta</taxon>
        <taxon>Spermatophyta</taxon>
        <taxon>Magnoliopsida</taxon>
        <taxon>eudicotyledons</taxon>
        <taxon>Gunneridae</taxon>
        <taxon>Pentapetalae</taxon>
        <taxon>asterids</taxon>
        <taxon>lamiids</taxon>
        <taxon>Solanales</taxon>
        <taxon>Convolvulaceae</taxon>
        <taxon>Ipomoeeae</taxon>
        <taxon>Ipomoea</taxon>
    </lineage>
</organism>
<keyword id="KW-0004">4Fe-4S</keyword>
<keyword id="KW-0150">Chloroplast</keyword>
<keyword id="KW-0408">Iron</keyword>
<keyword id="KW-0411">Iron-sulfur</keyword>
<keyword id="KW-0472">Membrane</keyword>
<keyword id="KW-0479">Metal-binding</keyword>
<keyword id="KW-0520">NAD</keyword>
<keyword id="KW-0521">NADP</keyword>
<keyword id="KW-0934">Plastid</keyword>
<keyword id="KW-0618">Plastoquinone</keyword>
<keyword id="KW-0874">Quinone</keyword>
<keyword id="KW-0793">Thylakoid</keyword>
<keyword id="KW-1278">Translocase</keyword>
<keyword id="KW-0813">Transport</keyword>
<geneLocation type="chloroplast"/>
<gene>
    <name evidence="1" type="primary">ndhK</name>
</gene>
<sequence>MNSIQFPLLDRTAKNSVISTTLNDLSNWSRLSSLWPLLYGTSCCFIEFASLIGSRFDFDRYGLVPRSSPRQADLILTAGTVTMKMAPSLVRLYEQMPEPKYVIAMGACTITGGMFSTDSYSTVRGVDKLIPVDVYLPGCPPKPEAIIDAITKLRKKISREIYQDRMKSQRANRCFTTNHKFRVGHSIHTGNYDQRFLSQPPSTSSIPTETETLFTYKNSVSSHELVNSAGFFGTK</sequence>
<proteinExistence type="inferred from homology"/>
<protein>
    <recommendedName>
        <fullName evidence="1">NAD(P)H-quinone oxidoreductase subunit K, chloroplastic</fullName>
        <ecNumber evidence="1">7.1.1.-</ecNumber>
    </recommendedName>
    <alternativeName>
        <fullName evidence="1">NAD(P)H dehydrogenase subunit K</fullName>
    </alternativeName>
    <alternativeName>
        <fullName evidence="1">NADH-plastoquinone oxidoreductase subunit K</fullName>
    </alternativeName>
</protein>
<evidence type="ECO:0000255" key="1">
    <source>
        <dbReference type="HAMAP-Rule" id="MF_01356"/>
    </source>
</evidence>
<name>NDHK_IPOPU</name>
<accession>A7Y3E1</accession>
<comment type="function">
    <text evidence="1">NDH shuttles electrons from NAD(P)H:plastoquinone, via FMN and iron-sulfur (Fe-S) centers, to quinones in the photosynthetic chain and possibly in a chloroplast respiratory chain. The immediate electron acceptor for the enzyme in this species is believed to be plastoquinone. Couples the redox reaction to proton translocation, and thus conserves the redox energy in a proton gradient.</text>
</comment>
<comment type="catalytic activity">
    <reaction evidence="1">
        <text>a plastoquinone + NADH + (n+1) H(+)(in) = a plastoquinol + NAD(+) + n H(+)(out)</text>
        <dbReference type="Rhea" id="RHEA:42608"/>
        <dbReference type="Rhea" id="RHEA-COMP:9561"/>
        <dbReference type="Rhea" id="RHEA-COMP:9562"/>
        <dbReference type="ChEBI" id="CHEBI:15378"/>
        <dbReference type="ChEBI" id="CHEBI:17757"/>
        <dbReference type="ChEBI" id="CHEBI:57540"/>
        <dbReference type="ChEBI" id="CHEBI:57945"/>
        <dbReference type="ChEBI" id="CHEBI:62192"/>
    </reaction>
</comment>
<comment type="catalytic activity">
    <reaction evidence="1">
        <text>a plastoquinone + NADPH + (n+1) H(+)(in) = a plastoquinol + NADP(+) + n H(+)(out)</text>
        <dbReference type="Rhea" id="RHEA:42612"/>
        <dbReference type="Rhea" id="RHEA-COMP:9561"/>
        <dbReference type="Rhea" id="RHEA-COMP:9562"/>
        <dbReference type="ChEBI" id="CHEBI:15378"/>
        <dbReference type="ChEBI" id="CHEBI:17757"/>
        <dbReference type="ChEBI" id="CHEBI:57783"/>
        <dbReference type="ChEBI" id="CHEBI:58349"/>
        <dbReference type="ChEBI" id="CHEBI:62192"/>
    </reaction>
</comment>
<comment type="cofactor">
    <cofactor evidence="1">
        <name>[4Fe-4S] cluster</name>
        <dbReference type="ChEBI" id="CHEBI:49883"/>
    </cofactor>
    <text evidence="1">Binds 1 [4Fe-4S] cluster.</text>
</comment>
<comment type="subunit">
    <text evidence="1">NDH is composed of at least 16 different subunits, 5 of which are encoded in the nucleus.</text>
</comment>
<comment type="subcellular location">
    <subcellularLocation>
        <location evidence="1">Plastid</location>
        <location evidence="1">Chloroplast thylakoid membrane</location>
        <topology evidence="1">Peripheral membrane protein</topology>
        <orientation evidence="1">Stromal side</orientation>
    </subcellularLocation>
</comment>
<comment type="similarity">
    <text evidence="1">Belongs to the complex I 20 kDa subunit family.</text>
</comment>
<dbReference type="EC" id="7.1.1.-" evidence="1"/>
<dbReference type="EMBL" id="EU118126">
    <property type="protein sequence ID" value="ABV02352.1"/>
    <property type="molecule type" value="Genomic_DNA"/>
</dbReference>
<dbReference type="RefSeq" id="YP_001468312.1">
    <property type="nucleotide sequence ID" value="NC_009808.1"/>
</dbReference>
<dbReference type="SMR" id="A7Y3E1"/>
<dbReference type="GeneID" id="5601279"/>
<dbReference type="GO" id="GO:0009535">
    <property type="term" value="C:chloroplast thylakoid membrane"/>
    <property type="evidence" value="ECO:0007669"/>
    <property type="project" value="UniProtKB-SubCell"/>
</dbReference>
<dbReference type="GO" id="GO:0045271">
    <property type="term" value="C:respiratory chain complex I"/>
    <property type="evidence" value="ECO:0007669"/>
    <property type="project" value="TreeGrafter"/>
</dbReference>
<dbReference type="GO" id="GO:0051539">
    <property type="term" value="F:4 iron, 4 sulfur cluster binding"/>
    <property type="evidence" value="ECO:0007669"/>
    <property type="project" value="UniProtKB-KW"/>
</dbReference>
<dbReference type="GO" id="GO:0005506">
    <property type="term" value="F:iron ion binding"/>
    <property type="evidence" value="ECO:0007669"/>
    <property type="project" value="UniProtKB-UniRule"/>
</dbReference>
<dbReference type="GO" id="GO:0008137">
    <property type="term" value="F:NADH dehydrogenase (ubiquinone) activity"/>
    <property type="evidence" value="ECO:0007669"/>
    <property type="project" value="InterPro"/>
</dbReference>
<dbReference type="GO" id="GO:0048038">
    <property type="term" value="F:quinone binding"/>
    <property type="evidence" value="ECO:0007669"/>
    <property type="project" value="UniProtKB-KW"/>
</dbReference>
<dbReference type="GO" id="GO:0009060">
    <property type="term" value="P:aerobic respiration"/>
    <property type="evidence" value="ECO:0007669"/>
    <property type="project" value="TreeGrafter"/>
</dbReference>
<dbReference type="GO" id="GO:0015990">
    <property type="term" value="P:electron transport coupled proton transport"/>
    <property type="evidence" value="ECO:0007669"/>
    <property type="project" value="TreeGrafter"/>
</dbReference>
<dbReference type="GO" id="GO:0019684">
    <property type="term" value="P:photosynthesis, light reaction"/>
    <property type="evidence" value="ECO:0007669"/>
    <property type="project" value="UniProtKB-UniRule"/>
</dbReference>
<dbReference type="FunFam" id="3.40.50.12280:FF:000003">
    <property type="entry name" value="NAD(P)H-quinone oxidoreductase subunit K, chloroplastic"/>
    <property type="match status" value="1"/>
</dbReference>
<dbReference type="Gene3D" id="3.40.50.12280">
    <property type="match status" value="1"/>
</dbReference>
<dbReference type="HAMAP" id="MF_01356">
    <property type="entry name" value="NDH1_NuoB"/>
    <property type="match status" value="1"/>
</dbReference>
<dbReference type="InterPro" id="IPR006137">
    <property type="entry name" value="NADH_UbQ_OxRdtase-like_20kDa"/>
</dbReference>
<dbReference type="InterPro" id="IPR006138">
    <property type="entry name" value="NADH_UQ_OxRdtase_20Kd_su"/>
</dbReference>
<dbReference type="NCBIfam" id="TIGR01957">
    <property type="entry name" value="nuoB_fam"/>
    <property type="match status" value="1"/>
</dbReference>
<dbReference type="NCBIfam" id="NF005012">
    <property type="entry name" value="PRK06411.1"/>
    <property type="match status" value="1"/>
</dbReference>
<dbReference type="PANTHER" id="PTHR11995">
    <property type="entry name" value="NADH DEHYDROGENASE"/>
    <property type="match status" value="1"/>
</dbReference>
<dbReference type="PANTHER" id="PTHR11995:SF14">
    <property type="entry name" value="NADH DEHYDROGENASE [UBIQUINONE] IRON-SULFUR PROTEIN 7, MITOCHONDRIAL"/>
    <property type="match status" value="1"/>
</dbReference>
<dbReference type="Pfam" id="PF01058">
    <property type="entry name" value="Oxidored_q6"/>
    <property type="match status" value="1"/>
</dbReference>
<dbReference type="SUPFAM" id="SSF56770">
    <property type="entry name" value="HydA/Nqo6-like"/>
    <property type="match status" value="1"/>
</dbReference>
<dbReference type="PROSITE" id="PS01150">
    <property type="entry name" value="COMPLEX1_20K"/>
    <property type="match status" value="1"/>
</dbReference>
<reference key="1">
    <citation type="journal article" date="2007" name="BMC Plant Biol.">
        <title>Complete plastid genome sequences suggest strong selection for retention of photosynthetic genes in the parasitic plant genus Cuscuta.</title>
        <authorList>
            <person name="McNeal J.R."/>
            <person name="Kuehl J.V."/>
            <person name="Boore J.L."/>
            <person name="dePamphilis C.W."/>
        </authorList>
    </citation>
    <scope>NUCLEOTIDE SEQUENCE [LARGE SCALE GENOMIC DNA]</scope>
</reference>